<gene>
    <name evidence="1" type="primary">nfuA</name>
    <name type="ordered locus">TERTU_2127</name>
</gene>
<reference key="1">
    <citation type="journal article" date="2009" name="PLoS ONE">
        <title>The complete genome of Teredinibacter turnerae T7901: an intracellular endosymbiont of marine wood-boring bivalves (shipworms).</title>
        <authorList>
            <person name="Yang J.C."/>
            <person name="Madupu R."/>
            <person name="Durkin A.S."/>
            <person name="Ekborg N.A."/>
            <person name="Pedamallu C.S."/>
            <person name="Hostetler J.B."/>
            <person name="Radune D."/>
            <person name="Toms B.S."/>
            <person name="Henrissat B."/>
            <person name="Coutinho P.M."/>
            <person name="Schwarz S."/>
            <person name="Field L."/>
            <person name="Trindade-Silva A.E."/>
            <person name="Soares C.A.G."/>
            <person name="Elshahawi S."/>
            <person name="Hanora A."/>
            <person name="Schmidt E.W."/>
            <person name="Haygood M.G."/>
            <person name="Posfai J."/>
            <person name="Benner J."/>
            <person name="Madinger C."/>
            <person name="Nove J."/>
            <person name="Anton B."/>
            <person name="Chaudhary K."/>
            <person name="Foster J."/>
            <person name="Holman A."/>
            <person name="Kumar S."/>
            <person name="Lessard P.A."/>
            <person name="Luyten Y.A."/>
            <person name="Slatko B."/>
            <person name="Wood N."/>
            <person name="Wu B."/>
            <person name="Teplitski M."/>
            <person name="Mougous J.D."/>
            <person name="Ward N."/>
            <person name="Eisen J.A."/>
            <person name="Badger J.H."/>
            <person name="Distel D.L."/>
        </authorList>
    </citation>
    <scope>NUCLEOTIDE SEQUENCE [LARGE SCALE GENOMIC DNA]</scope>
    <source>
        <strain>ATCC 39867 / T7901</strain>
    </source>
</reference>
<keyword id="KW-0004">4Fe-4S</keyword>
<keyword id="KW-0408">Iron</keyword>
<keyword id="KW-0411">Iron-sulfur</keyword>
<keyword id="KW-0479">Metal-binding</keyword>
<keyword id="KW-1185">Reference proteome</keyword>
<organism>
    <name type="scientific">Teredinibacter turnerae (strain ATCC 39867 / T7901)</name>
    <dbReference type="NCBI Taxonomy" id="377629"/>
    <lineage>
        <taxon>Bacteria</taxon>
        <taxon>Pseudomonadati</taxon>
        <taxon>Pseudomonadota</taxon>
        <taxon>Gammaproteobacteria</taxon>
        <taxon>Cellvibrionales</taxon>
        <taxon>Cellvibrionaceae</taxon>
        <taxon>Teredinibacter</taxon>
    </lineage>
</organism>
<proteinExistence type="inferred from homology"/>
<dbReference type="EMBL" id="CP001614">
    <property type="protein sequence ID" value="ACR11891.1"/>
    <property type="molecule type" value="Genomic_DNA"/>
</dbReference>
<dbReference type="RefSeq" id="WP_015818003.1">
    <property type="nucleotide sequence ID" value="NC_012997.1"/>
</dbReference>
<dbReference type="SMR" id="C5BJC0"/>
<dbReference type="STRING" id="377629.TERTU_2127"/>
<dbReference type="KEGG" id="ttu:TERTU_2127"/>
<dbReference type="eggNOG" id="COG0316">
    <property type="taxonomic scope" value="Bacteria"/>
</dbReference>
<dbReference type="eggNOG" id="COG0694">
    <property type="taxonomic scope" value="Bacteria"/>
</dbReference>
<dbReference type="HOGENOM" id="CLU_094569_0_0_6"/>
<dbReference type="OrthoDB" id="9785450at2"/>
<dbReference type="Proteomes" id="UP000009080">
    <property type="component" value="Chromosome"/>
</dbReference>
<dbReference type="GO" id="GO:0051539">
    <property type="term" value="F:4 iron, 4 sulfur cluster binding"/>
    <property type="evidence" value="ECO:0007669"/>
    <property type="project" value="UniProtKB-UniRule"/>
</dbReference>
<dbReference type="GO" id="GO:0005506">
    <property type="term" value="F:iron ion binding"/>
    <property type="evidence" value="ECO:0007669"/>
    <property type="project" value="InterPro"/>
</dbReference>
<dbReference type="GO" id="GO:0016226">
    <property type="term" value="P:iron-sulfur cluster assembly"/>
    <property type="evidence" value="ECO:0007669"/>
    <property type="project" value="UniProtKB-UniRule"/>
</dbReference>
<dbReference type="GO" id="GO:0051604">
    <property type="term" value="P:protein maturation"/>
    <property type="evidence" value="ECO:0007669"/>
    <property type="project" value="UniProtKB-UniRule"/>
</dbReference>
<dbReference type="Gene3D" id="3.30.300.130">
    <property type="entry name" value="Fe-S cluster assembly (FSCA)"/>
    <property type="match status" value="1"/>
</dbReference>
<dbReference type="Gene3D" id="2.60.300.12">
    <property type="entry name" value="HesB-like domain"/>
    <property type="match status" value="1"/>
</dbReference>
<dbReference type="HAMAP" id="MF_01637">
    <property type="entry name" value="Fe_S_biogen_NfuA"/>
    <property type="match status" value="1"/>
</dbReference>
<dbReference type="InterPro" id="IPR017726">
    <property type="entry name" value="Fe/S_biogenesis_protein_NfuA"/>
</dbReference>
<dbReference type="InterPro" id="IPR000361">
    <property type="entry name" value="FeS_biogenesis"/>
</dbReference>
<dbReference type="InterPro" id="IPR034904">
    <property type="entry name" value="FSCA_dom_sf"/>
</dbReference>
<dbReference type="InterPro" id="IPR035903">
    <property type="entry name" value="HesB-like_dom_sf"/>
</dbReference>
<dbReference type="InterPro" id="IPR001075">
    <property type="entry name" value="NIF_FeS_clus_asmbl_NifU_C"/>
</dbReference>
<dbReference type="NCBIfam" id="TIGR03341">
    <property type="entry name" value="YhgI_GntY"/>
    <property type="match status" value="1"/>
</dbReference>
<dbReference type="PANTHER" id="PTHR11178:SF51">
    <property type="entry name" value="FE_S BIOGENESIS PROTEIN NFUA"/>
    <property type="match status" value="1"/>
</dbReference>
<dbReference type="PANTHER" id="PTHR11178">
    <property type="entry name" value="IRON-SULFUR CLUSTER SCAFFOLD PROTEIN NFU-RELATED"/>
    <property type="match status" value="1"/>
</dbReference>
<dbReference type="Pfam" id="PF01521">
    <property type="entry name" value="Fe-S_biosyn"/>
    <property type="match status" value="1"/>
</dbReference>
<dbReference type="Pfam" id="PF01106">
    <property type="entry name" value="NifU"/>
    <property type="match status" value="1"/>
</dbReference>
<dbReference type="SUPFAM" id="SSF117916">
    <property type="entry name" value="Fe-S cluster assembly (FSCA) domain-like"/>
    <property type="match status" value="1"/>
</dbReference>
<dbReference type="SUPFAM" id="SSF89360">
    <property type="entry name" value="HesB-like domain"/>
    <property type="match status" value="1"/>
</dbReference>
<evidence type="ECO:0000255" key="1">
    <source>
        <dbReference type="HAMAP-Rule" id="MF_01637"/>
    </source>
</evidence>
<accession>C5BJC0</accession>
<protein>
    <recommendedName>
        <fullName evidence="1">Fe/S biogenesis protein NfuA</fullName>
    </recommendedName>
</protein>
<comment type="function">
    <text evidence="1">Involved in iron-sulfur cluster biogenesis. Binds a 4Fe-4S cluster, can transfer this cluster to apoproteins, and thereby intervenes in the maturation of Fe/S proteins. Could also act as a scaffold/chaperone for damaged Fe/S proteins.</text>
</comment>
<comment type="cofactor">
    <cofactor evidence="1">
        <name>[4Fe-4S] cluster</name>
        <dbReference type="ChEBI" id="CHEBI:49883"/>
    </cofactor>
    <text evidence="1">Binds 1 [4Fe-4S] cluster per subunit. The cluster is presumably bound at the interface of two monomers.</text>
</comment>
<comment type="subunit">
    <text evidence="1">Homodimer.</text>
</comment>
<comment type="similarity">
    <text evidence="1">Belongs to the NfuA family.</text>
</comment>
<sequence length="194" mass="21265">MLNVTITDSAQTYLRELLEKQACEGIGIRMFVSNPGTPQAETCIAYCRPGEAEEADHVMELSGFNAYFEDRSVPFLDEAKVDYAPDKMGGQLTIRAPNSKMPKISDDSPIEDKINYVLYNEVNPGLASHGGNVSLERLTDDGMAILRFGGGCQGCSAVDMTLKQGVEKTLMERIPELAGVRDVTDHSDKSNAYY</sequence>
<name>NFUA_TERTT</name>
<feature type="chain" id="PRO_1000215819" description="Fe/S biogenesis protein NfuA">
    <location>
        <begin position="1"/>
        <end position="194"/>
    </location>
</feature>
<feature type="binding site" evidence="1">
    <location>
        <position position="152"/>
    </location>
    <ligand>
        <name>[4Fe-4S] cluster</name>
        <dbReference type="ChEBI" id="CHEBI:49883"/>
    </ligand>
</feature>
<feature type="binding site" evidence="1">
    <location>
        <position position="155"/>
    </location>
    <ligand>
        <name>[4Fe-4S] cluster</name>
        <dbReference type="ChEBI" id="CHEBI:49883"/>
    </ligand>
</feature>